<sequence>MMKQKTIAKEFSVTGVGLHSGVDVSMTVKPADIDSGIVFRRADLTPVVDIKVTPSSIKEAIMCTLLTKDGDQNLSVSTIEHLMSAFAMFEVDNVLIEVNAPELPVMDGSSYEFTQLLKQVGIVEQNSARKGIKILKPVRVEHEDKFAEVLPSDTLKYEFKIHWDHPVIAATNDHIVFEYDLDEYIKMVSKARTFGFYEQLAYLHQNNLAKGASLDNAVGVTNEGVLNEGGLRYDDEFVRHKLLDAIGDFYVGGYILGHFNCFKSGHTLNNKLLHAVFADKDAWEYI</sequence>
<reference key="1">
    <citation type="journal article" date="2006" name="J. Bacteriol.">
        <title>Chromosome rearrangement and diversification of Francisella tularensis revealed by the type B (OSU18) genome sequence.</title>
        <authorList>
            <person name="Petrosino J.F."/>
            <person name="Xiang Q."/>
            <person name="Karpathy S.E."/>
            <person name="Jiang H."/>
            <person name="Yerrapragada S."/>
            <person name="Liu Y."/>
            <person name="Gioia J."/>
            <person name="Hemphill L."/>
            <person name="Gonzalez A."/>
            <person name="Raghavan T.M."/>
            <person name="Uzman A."/>
            <person name="Fox G.E."/>
            <person name="Highlander S."/>
            <person name="Reichard M."/>
            <person name="Morton R.J."/>
            <person name="Clinkenbeard K.D."/>
            <person name="Weinstock G.M."/>
        </authorList>
    </citation>
    <scope>NUCLEOTIDE SEQUENCE [LARGE SCALE GENOMIC DNA]</scope>
    <source>
        <strain>OSU18</strain>
    </source>
</reference>
<proteinExistence type="inferred from homology"/>
<feature type="chain" id="PRO_1000122792" description="UDP-3-O-acyl-N-acetylglucosamine deacetylase">
    <location>
        <begin position="1"/>
        <end position="286"/>
    </location>
</feature>
<feature type="active site" description="Proton donor" evidence="1">
    <location>
        <position position="266"/>
    </location>
</feature>
<feature type="binding site" evidence="1">
    <location>
        <position position="81"/>
    </location>
    <ligand>
        <name>Zn(2+)</name>
        <dbReference type="ChEBI" id="CHEBI:29105"/>
    </ligand>
</feature>
<feature type="binding site" evidence="1">
    <location>
        <position position="240"/>
    </location>
    <ligand>
        <name>Zn(2+)</name>
        <dbReference type="ChEBI" id="CHEBI:29105"/>
    </ligand>
</feature>
<feature type="binding site" evidence="1">
    <location>
        <position position="244"/>
    </location>
    <ligand>
        <name>Zn(2+)</name>
        <dbReference type="ChEBI" id="CHEBI:29105"/>
    </ligand>
</feature>
<name>LPXC_FRATO</name>
<dbReference type="EC" id="3.5.1.108" evidence="1"/>
<dbReference type="EMBL" id="CP000437">
    <property type="protein sequence ID" value="ABI83579.1"/>
    <property type="molecule type" value="Genomic_DNA"/>
</dbReference>
<dbReference type="RefSeq" id="WP_003017478.1">
    <property type="nucleotide sequence ID" value="NC_017463.1"/>
</dbReference>
<dbReference type="SMR" id="Q0BK05"/>
<dbReference type="KEGG" id="fth:FTH_1829"/>
<dbReference type="UniPathway" id="UPA00359">
    <property type="reaction ID" value="UER00478"/>
</dbReference>
<dbReference type="GO" id="GO:0016020">
    <property type="term" value="C:membrane"/>
    <property type="evidence" value="ECO:0007669"/>
    <property type="project" value="GOC"/>
</dbReference>
<dbReference type="GO" id="GO:0046872">
    <property type="term" value="F:metal ion binding"/>
    <property type="evidence" value="ECO:0007669"/>
    <property type="project" value="UniProtKB-KW"/>
</dbReference>
<dbReference type="GO" id="GO:0103117">
    <property type="term" value="F:UDP-3-O-acyl-N-acetylglucosamine deacetylase activity"/>
    <property type="evidence" value="ECO:0007669"/>
    <property type="project" value="UniProtKB-UniRule"/>
</dbReference>
<dbReference type="GO" id="GO:0009245">
    <property type="term" value="P:lipid A biosynthetic process"/>
    <property type="evidence" value="ECO:0007669"/>
    <property type="project" value="UniProtKB-UniRule"/>
</dbReference>
<dbReference type="Gene3D" id="3.30.230.20">
    <property type="entry name" value="lpxc deacetylase, domain 1"/>
    <property type="match status" value="1"/>
</dbReference>
<dbReference type="Gene3D" id="3.30.1700.10">
    <property type="entry name" value="lpxc deacetylase, domain 2"/>
    <property type="match status" value="1"/>
</dbReference>
<dbReference type="HAMAP" id="MF_00388">
    <property type="entry name" value="LpxC"/>
    <property type="match status" value="1"/>
</dbReference>
<dbReference type="InterPro" id="IPR020568">
    <property type="entry name" value="Ribosomal_Su5_D2-typ_SF"/>
</dbReference>
<dbReference type="InterPro" id="IPR004463">
    <property type="entry name" value="UDP-acyl_GlcNac_deAcase"/>
</dbReference>
<dbReference type="InterPro" id="IPR011334">
    <property type="entry name" value="UDP-acyl_GlcNac_deAcase_C"/>
</dbReference>
<dbReference type="InterPro" id="IPR015870">
    <property type="entry name" value="UDP-acyl_N-AcGlcN_deAcase_N"/>
</dbReference>
<dbReference type="NCBIfam" id="TIGR00325">
    <property type="entry name" value="lpxC"/>
    <property type="match status" value="1"/>
</dbReference>
<dbReference type="PANTHER" id="PTHR33694">
    <property type="entry name" value="UDP-3-O-ACYL-N-ACETYLGLUCOSAMINE DEACETYLASE 1, MITOCHONDRIAL-RELATED"/>
    <property type="match status" value="1"/>
</dbReference>
<dbReference type="PANTHER" id="PTHR33694:SF1">
    <property type="entry name" value="UDP-3-O-ACYL-N-ACETYLGLUCOSAMINE DEACETYLASE 1, MITOCHONDRIAL-RELATED"/>
    <property type="match status" value="1"/>
</dbReference>
<dbReference type="Pfam" id="PF03331">
    <property type="entry name" value="LpxC"/>
    <property type="match status" value="1"/>
</dbReference>
<dbReference type="SUPFAM" id="SSF54211">
    <property type="entry name" value="Ribosomal protein S5 domain 2-like"/>
    <property type="match status" value="2"/>
</dbReference>
<protein>
    <recommendedName>
        <fullName evidence="1">UDP-3-O-acyl-N-acetylglucosamine deacetylase</fullName>
        <shortName evidence="1">UDP-3-O-acyl-GlcNAc deacetylase</shortName>
        <ecNumber evidence="1">3.5.1.108</ecNumber>
    </recommendedName>
    <alternativeName>
        <fullName evidence="1">UDP-3-O-[R-3-hydroxymyristoyl]-N-acetylglucosamine deacetylase</fullName>
    </alternativeName>
</protein>
<keyword id="KW-0378">Hydrolase</keyword>
<keyword id="KW-0441">Lipid A biosynthesis</keyword>
<keyword id="KW-0444">Lipid biosynthesis</keyword>
<keyword id="KW-0443">Lipid metabolism</keyword>
<keyword id="KW-0479">Metal-binding</keyword>
<keyword id="KW-0862">Zinc</keyword>
<comment type="function">
    <text evidence="1">Catalyzes the hydrolysis of UDP-3-O-myristoyl-N-acetylglucosamine to form UDP-3-O-myristoylglucosamine and acetate, the committed step in lipid A biosynthesis.</text>
</comment>
<comment type="catalytic activity">
    <reaction evidence="1">
        <text>a UDP-3-O-[(3R)-3-hydroxyacyl]-N-acetyl-alpha-D-glucosamine + H2O = a UDP-3-O-[(3R)-3-hydroxyacyl]-alpha-D-glucosamine + acetate</text>
        <dbReference type="Rhea" id="RHEA:67816"/>
        <dbReference type="ChEBI" id="CHEBI:15377"/>
        <dbReference type="ChEBI" id="CHEBI:30089"/>
        <dbReference type="ChEBI" id="CHEBI:137740"/>
        <dbReference type="ChEBI" id="CHEBI:173225"/>
        <dbReference type="EC" id="3.5.1.108"/>
    </reaction>
</comment>
<comment type="cofactor">
    <cofactor evidence="1">
        <name>Zn(2+)</name>
        <dbReference type="ChEBI" id="CHEBI:29105"/>
    </cofactor>
</comment>
<comment type="pathway">
    <text evidence="1">Glycolipid biosynthesis; lipid IV(A) biosynthesis; lipid IV(A) from (3R)-3-hydroxytetradecanoyl-[acyl-carrier-protein] and UDP-N-acetyl-alpha-D-glucosamine: step 2/6.</text>
</comment>
<comment type="similarity">
    <text evidence="1">Belongs to the LpxC family.</text>
</comment>
<accession>Q0BK05</accession>
<evidence type="ECO:0000255" key="1">
    <source>
        <dbReference type="HAMAP-Rule" id="MF_00388"/>
    </source>
</evidence>
<gene>
    <name evidence="1" type="primary">lpxC</name>
    <name type="ordered locus">FTH_1829</name>
</gene>
<organism>
    <name type="scientific">Francisella tularensis subsp. holarctica (strain OSU18)</name>
    <dbReference type="NCBI Taxonomy" id="393011"/>
    <lineage>
        <taxon>Bacteria</taxon>
        <taxon>Pseudomonadati</taxon>
        <taxon>Pseudomonadota</taxon>
        <taxon>Gammaproteobacteria</taxon>
        <taxon>Thiotrichales</taxon>
        <taxon>Francisellaceae</taxon>
        <taxon>Francisella</taxon>
    </lineage>
</organism>